<proteinExistence type="inferred from homology"/>
<dbReference type="EC" id="3.1.26.3" evidence="1"/>
<dbReference type="EMBL" id="AE009949">
    <property type="protein sequence ID" value="AAL97288.1"/>
    <property type="molecule type" value="Genomic_DNA"/>
</dbReference>
<dbReference type="RefSeq" id="WP_002990670.1">
    <property type="nucleotide sequence ID" value="NC_003485.1"/>
</dbReference>
<dbReference type="SMR" id="P66672"/>
<dbReference type="KEGG" id="spm:spyM18_0597"/>
<dbReference type="HOGENOM" id="CLU_000907_1_3_9"/>
<dbReference type="GO" id="GO:0005737">
    <property type="term" value="C:cytoplasm"/>
    <property type="evidence" value="ECO:0007669"/>
    <property type="project" value="UniProtKB-SubCell"/>
</dbReference>
<dbReference type="GO" id="GO:0003725">
    <property type="term" value="F:double-stranded RNA binding"/>
    <property type="evidence" value="ECO:0007669"/>
    <property type="project" value="TreeGrafter"/>
</dbReference>
<dbReference type="GO" id="GO:0046872">
    <property type="term" value="F:metal ion binding"/>
    <property type="evidence" value="ECO:0007669"/>
    <property type="project" value="UniProtKB-KW"/>
</dbReference>
<dbReference type="GO" id="GO:0004525">
    <property type="term" value="F:ribonuclease III activity"/>
    <property type="evidence" value="ECO:0007669"/>
    <property type="project" value="UniProtKB-UniRule"/>
</dbReference>
<dbReference type="GO" id="GO:0019843">
    <property type="term" value="F:rRNA binding"/>
    <property type="evidence" value="ECO:0007669"/>
    <property type="project" value="UniProtKB-KW"/>
</dbReference>
<dbReference type="GO" id="GO:0006397">
    <property type="term" value="P:mRNA processing"/>
    <property type="evidence" value="ECO:0007669"/>
    <property type="project" value="UniProtKB-UniRule"/>
</dbReference>
<dbReference type="GO" id="GO:0010468">
    <property type="term" value="P:regulation of gene expression"/>
    <property type="evidence" value="ECO:0007669"/>
    <property type="project" value="TreeGrafter"/>
</dbReference>
<dbReference type="GO" id="GO:0006364">
    <property type="term" value="P:rRNA processing"/>
    <property type="evidence" value="ECO:0007669"/>
    <property type="project" value="UniProtKB-UniRule"/>
</dbReference>
<dbReference type="GO" id="GO:0008033">
    <property type="term" value="P:tRNA processing"/>
    <property type="evidence" value="ECO:0007669"/>
    <property type="project" value="UniProtKB-KW"/>
</dbReference>
<dbReference type="CDD" id="cd10845">
    <property type="entry name" value="DSRM_RNAse_III_family"/>
    <property type="match status" value="1"/>
</dbReference>
<dbReference type="CDD" id="cd00593">
    <property type="entry name" value="RIBOc"/>
    <property type="match status" value="1"/>
</dbReference>
<dbReference type="FunFam" id="1.10.1520.10:FF:000001">
    <property type="entry name" value="Ribonuclease 3"/>
    <property type="match status" value="1"/>
</dbReference>
<dbReference type="FunFam" id="3.30.160.20:FF:000003">
    <property type="entry name" value="Ribonuclease 3"/>
    <property type="match status" value="1"/>
</dbReference>
<dbReference type="Gene3D" id="3.30.160.20">
    <property type="match status" value="1"/>
</dbReference>
<dbReference type="Gene3D" id="1.10.1520.10">
    <property type="entry name" value="Ribonuclease III domain"/>
    <property type="match status" value="1"/>
</dbReference>
<dbReference type="HAMAP" id="MF_00104">
    <property type="entry name" value="RNase_III"/>
    <property type="match status" value="1"/>
</dbReference>
<dbReference type="InterPro" id="IPR014720">
    <property type="entry name" value="dsRBD_dom"/>
</dbReference>
<dbReference type="InterPro" id="IPR011907">
    <property type="entry name" value="RNase_III"/>
</dbReference>
<dbReference type="InterPro" id="IPR000999">
    <property type="entry name" value="RNase_III_dom"/>
</dbReference>
<dbReference type="InterPro" id="IPR036389">
    <property type="entry name" value="RNase_III_sf"/>
</dbReference>
<dbReference type="NCBIfam" id="TIGR02191">
    <property type="entry name" value="RNaseIII"/>
    <property type="match status" value="1"/>
</dbReference>
<dbReference type="PANTHER" id="PTHR11207:SF0">
    <property type="entry name" value="RIBONUCLEASE 3"/>
    <property type="match status" value="1"/>
</dbReference>
<dbReference type="PANTHER" id="PTHR11207">
    <property type="entry name" value="RIBONUCLEASE III"/>
    <property type="match status" value="1"/>
</dbReference>
<dbReference type="Pfam" id="PF00035">
    <property type="entry name" value="dsrm"/>
    <property type="match status" value="1"/>
</dbReference>
<dbReference type="Pfam" id="PF14622">
    <property type="entry name" value="Ribonucleas_3_3"/>
    <property type="match status" value="1"/>
</dbReference>
<dbReference type="SMART" id="SM00358">
    <property type="entry name" value="DSRM"/>
    <property type="match status" value="1"/>
</dbReference>
<dbReference type="SMART" id="SM00535">
    <property type="entry name" value="RIBOc"/>
    <property type="match status" value="1"/>
</dbReference>
<dbReference type="SUPFAM" id="SSF54768">
    <property type="entry name" value="dsRNA-binding domain-like"/>
    <property type="match status" value="1"/>
</dbReference>
<dbReference type="SUPFAM" id="SSF69065">
    <property type="entry name" value="RNase III domain-like"/>
    <property type="match status" value="1"/>
</dbReference>
<dbReference type="PROSITE" id="PS50137">
    <property type="entry name" value="DS_RBD"/>
    <property type="match status" value="1"/>
</dbReference>
<dbReference type="PROSITE" id="PS00517">
    <property type="entry name" value="RNASE_3_1"/>
    <property type="match status" value="1"/>
</dbReference>
<dbReference type="PROSITE" id="PS50142">
    <property type="entry name" value="RNASE_3_2"/>
    <property type="match status" value="1"/>
</dbReference>
<sequence length="230" mass="25848">MKQLEELLSTSFDIQFNDLTLLETAFTHTSYANEHRLLNVSHNERLEFLGDAVLQLIISEYLFAKYPKKTEGDMSKLRSMIVREESLAGFSRFCSFDAYIKLGKGEEKSGGRRRDTILGDLFEAFLGALLLDKGIDAVRRFLKQVMIPQVEKGNFERVKDYKTCLQEFLQTKGDVAIDYQVISEKGPAHAKQFEVSIVVNGAVLSKGLGKSKKLAEQDAAKNALAQLSEV</sequence>
<name>RNC_STRP8</name>
<organism>
    <name type="scientific">Streptococcus pyogenes serotype M18 (strain MGAS8232)</name>
    <dbReference type="NCBI Taxonomy" id="186103"/>
    <lineage>
        <taxon>Bacteria</taxon>
        <taxon>Bacillati</taxon>
        <taxon>Bacillota</taxon>
        <taxon>Bacilli</taxon>
        <taxon>Lactobacillales</taxon>
        <taxon>Streptococcaceae</taxon>
        <taxon>Streptococcus</taxon>
    </lineage>
</organism>
<comment type="function">
    <text evidence="1">Digests double-stranded RNA. Involved in the processing of primary rRNA transcript to yield the immediate precursors to the large and small rRNAs (23S and 16S). Processes some mRNAs, and tRNAs when they are encoded in the rRNA operon. Processes pre-crRNA and tracrRNA of type II CRISPR loci if present in the organism.</text>
</comment>
<comment type="catalytic activity">
    <reaction evidence="1">
        <text>Endonucleolytic cleavage to 5'-phosphomonoester.</text>
        <dbReference type="EC" id="3.1.26.3"/>
    </reaction>
</comment>
<comment type="cofactor">
    <cofactor evidence="1">
        <name>Mg(2+)</name>
        <dbReference type="ChEBI" id="CHEBI:18420"/>
    </cofactor>
</comment>
<comment type="subunit">
    <text evidence="1">Homodimer.</text>
</comment>
<comment type="subcellular location">
    <subcellularLocation>
        <location evidence="1">Cytoplasm</location>
    </subcellularLocation>
</comment>
<comment type="similarity">
    <text evidence="1">Belongs to the ribonuclease III family.</text>
</comment>
<gene>
    <name evidence="1" type="primary">rnc</name>
    <name type="synonym">acpA</name>
    <name type="ordered locus">spyM18_0597</name>
</gene>
<protein>
    <recommendedName>
        <fullName evidence="1">Ribonuclease 3</fullName>
        <ecNumber evidence="1">3.1.26.3</ecNumber>
    </recommendedName>
    <alternativeName>
        <fullName evidence="1">Ribonuclease III</fullName>
        <shortName evidence="1">RNase III</shortName>
    </alternativeName>
</protein>
<accession>P66672</accession>
<accession>Q9A105</accession>
<reference key="1">
    <citation type="journal article" date="2002" name="Proc. Natl. Acad. Sci. U.S.A.">
        <title>Genome sequence and comparative microarray analysis of serotype M18 group A Streptococcus strains associated with acute rheumatic fever outbreaks.</title>
        <authorList>
            <person name="Smoot J.C."/>
            <person name="Barbian K.D."/>
            <person name="Van Gompel J.J."/>
            <person name="Smoot L.M."/>
            <person name="Chaussee M.S."/>
            <person name="Sylva G.L."/>
            <person name="Sturdevant D.E."/>
            <person name="Ricklefs S.M."/>
            <person name="Porcella S.F."/>
            <person name="Parkins L.D."/>
            <person name="Beres S.B."/>
            <person name="Campbell D.S."/>
            <person name="Smith T.M."/>
            <person name="Zhang Q."/>
            <person name="Kapur V."/>
            <person name="Daly J.A."/>
            <person name="Veasy L.G."/>
            <person name="Musser J.M."/>
        </authorList>
    </citation>
    <scope>NUCLEOTIDE SEQUENCE [LARGE SCALE GENOMIC DNA]</scope>
    <source>
        <strain>MGAS8232</strain>
    </source>
</reference>
<evidence type="ECO:0000255" key="1">
    <source>
        <dbReference type="HAMAP-Rule" id="MF_00104"/>
    </source>
</evidence>
<feature type="chain" id="PRO_0000180446" description="Ribonuclease 3">
    <location>
        <begin position="1"/>
        <end position="230"/>
    </location>
</feature>
<feature type="domain" description="RNase III" evidence="1">
    <location>
        <begin position="1"/>
        <end position="134"/>
    </location>
</feature>
<feature type="domain" description="DRBM" evidence="1">
    <location>
        <begin position="160"/>
        <end position="229"/>
    </location>
</feature>
<feature type="active site" evidence="1">
    <location>
        <position position="51"/>
    </location>
</feature>
<feature type="active site" evidence="1">
    <location>
        <position position="123"/>
    </location>
</feature>
<feature type="binding site" evidence="1">
    <location>
        <position position="47"/>
    </location>
    <ligand>
        <name>Mg(2+)</name>
        <dbReference type="ChEBI" id="CHEBI:18420"/>
    </ligand>
</feature>
<feature type="binding site" evidence="1">
    <location>
        <position position="120"/>
    </location>
    <ligand>
        <name>Mg(2+)</name>
        <dbReference type="ChEBI" id="CHEBI:18420"/>
    </ligand>
</feature>
<feature type="binding site" evidence="1">
    <location>
        <position position="123"/>
    </location>
    <ligand>
        <name>Mg(2+)</name>
        <dbReference type="ChEBI" id="CHEBI:18420"/>
    </ligand>
</feature>
<keyword id="KW-0963">Cytoplasm</keyword>
<keyword id="KW-0255">Endonuclease</keyword>
<keyword id="KW-0378">Hydrolase</keyword>
<keyword id="KW-0460">Magnesium</keyword>
<keyword id="KW-0479">Metal-binding</keyword>
<keyword id="KW-0507">mRNA processing</keyword>
<keyword id="KW-0540">Nuclease</keyword>
<keyword id="KW-0694">RNA-binding</keyword>
<keyword id="KW-0698">rRNA processing</keyword>
<keyword id="KW-0699">rRNA-binding</keyword>
<keyword id="KW-0819">tRNA processing</keyword>